<sequence length="163" mass="18790">MERFIFAALLVVALSLSGTGADPQCLPGWSSSDGYCYKVFKEYKRWDDAEMFCRQEVEGGHLVSIHSKTEAKFLARLVFRKFILLNVWIGLSSPGKHGIWRWSDGSSFYYTSWAFGEPNNFLWNEYCVGLMSITGHRKWSDQNCRSKRYFICKAQPQGEGSTW</sequence>
<name>LECM1_ERYPO</name>
<accession>A7X3Z4</accession>
<organism>
    <name type="scientific">Erythrolamprus poecilogyrus</name>
    <name type="common">Water snake</name>
    <name type="synonym">Liophis poecilogyrus</name>
    <dbReference type="NCBI Taxonomy" id="338838"/>
    <lineage>
        <taxon>Eukaryota</taxon>
        <taxon>Metazoa</taxon>
        <taxon>Chordata</taxon>
        <taxon>Craniata</taxon>
        <taxon>Vertebrata</taxon>
        <taxon>Euteleostomi</taxon>
        <taxon>Lepidosauria</taxon>
        <taxon>Squamata</taxon>
        <taxon>Bifurcata</taxon>
        <taxon>Unidentata</taxon>
        <taxon>Episquamata</taxon>
        <taxon>Toxicofera</taxon>
        <taxon>Serpentes</taxon>
        <taxon>Colubroidea</taxon>
        <taxon>Dipsadidae</taxon>
        <taxon>Erythrolamprus</taxon>
    </lineage>
</organism>
<comment type="function">
    <text evidence="1">Mannose-binding lectin which recognizes specific carbohydrate structures and agglutinates a variety of animal cells by binding to cell-surface glycoproteins and glycolipids. May be a calcium-dependent lectin (By similarity).</text>
</comment>
<comment type="subcellular location">
    <subcellularLocation>
        <location evidence="1">Secreted</location>
    </subcellularLocation>
</comment>
<comment type="tissue specificity">
    <text>Expressed by the venom gland.</text>
</comment>
<comment type="similarity">
    <text evidence="4">Belongs to the true venom lectin family.</text>
</comment>
<protein>
    <recommendedName>
        <fullName>C-type lectin lectoxin-Lio1</fullName>
        <shortName>CTL</shortName>
    </recommendedName>
</protein>
<feature type="signal peptide" evidence="2">
    <location>
        <begin position="1"/>
        <end position="21"/>
    </location>
</feature>
<feature type="chain" id="PRO_0000355280" description="C-type lectin lectoxin-Lio1">
    <location>
        <begin position="22"/>
        <end position="163"/>
    </location>
</feature>
<feature type="domain" description="C-type lectin" evidence="3">
    <location>
        <begin position="32"/>
        <end position="153"/>
    </location>
</feature>
<feature type="short sequence motif" description="Mannose-binding">
    <location>
        <begin position="117"/>
        <end position="119"/>
    </location>
</feature>
<feature type="binding site" evidence="1">
    <location>
        <position position="125"/>
    </location>
    <ligand>
        <name>Ca(2+)</name>
        <dbReference type="ChEBI" id="CHEBI:29108"/>
    </ligand>
</feature>
<feature type="binding site" evidence="1">
    <location>
        <position position="141"/>
    </location>
    <ligand>
        <name>Ca(2+)</name>
        <dbReference type="ChEBI" id="CHEBI:29108"/>
    </ligand>
</feature>
<feature type="disulfide bond" evidence="3">
    <location>
        <begin position="25"/>
        <end position="36"/>
    </location>
</feature>
<feature type="disulfide bond" evidence="3">
    <location>
        <begin position="53"/>
        <end position="152"/>
    </location>
</feature>
<feature type="disulfide bond" evidence="3">
    <location>
        <begin position="127"/>
        <end position="144"/>
    </location>
</feature>
<evidence type="ECO:0000250" key="1"/>
<evidence type="ECO:0000255" key="2"/>
<evidence type="ECO:0000255" key="3">
    <source>
        <dbReference type="PROSITE-ProRule" id="PRU00040"/>
    </source>
</evidence>
<evidence type="ECO:0000305" key="4"/>
<proteinExistence type="evidence at transcript level"/>
<dbReference type="EMBL" id="EU029697">
    <property type="protein sequence ID" value="ABU68497.1"/>
    <property type="molecule type" value="mRNA"/>
</dbReference>
<dbReference type="SMR" id="A7X3Z4"/>
<dbReference type="GO" id="GO:0005576">
    <property type="term" value="C:extracellular region"/>
    <property type="evidence" value="ECO:0007669"/>
    <property type="project" value="UniProtKB-SubCell"/>
</dbReference>
<dbReference type="GO" id="GO:0030246">
    <property type="term" value="F:carbohydrate binding"/>
    <property type="evidence" value="ECO:0007669"/>
    <property type="project" value="UniProtKB-KW"/>
</dbReference>
<dbReference type="GO" id="GO:0046872">
    <property type="term" value="F:metal ion binding"/>
    <property type="evidence" value="ECO:0007669"/>
    <property type="project" value="UniProtKB-KW"/>
</dbReference>
<dbReference type="FunFam" id="3.10.100.10:FF:000087">
    <property type="entry name" value="Snaclec rhodocetin subunit delta"/>
    <property type="match status" value="1"/>
</dbReference>
<dbReference type="Gene3D" id="3.10.100.10">
    <property type="entry name" value="Mannose-Binding Protein A, subunit A"/>
    <property type="match status" value="1"/>
</dbReference>
<dbReference type="InterPro" id="IPR001304">
    <property type="entry name" value="C-type_lectin-like"/>
</dbReference>
<dbReference type="InterPro" id="IPR016186">
    <property type="entry name" value="C-type_lectin-like/link_sf"/>
</dbReference>
<dbReference type="InterPro" id="IPR050111">
    <property type="entry name" value="C-type_lectin/snaclec_domain"/>
</dbReference>
<dbReference type="InterPro" id="IPR018378">
    <property type="entry name" value="C-type_lectin_CS"/>
</dbReference>
<dbReference type="InterPro" id="IPR016187">
    <property type="entry name" value="CTDL_fold"/>
</dbReference>
<dbReference type="PANTHER" id="PTHR22803">
    <property type="entry name" value="MANNOSE, PHOSPHOLIPASE, LECTIN RECEPTOR RELATED"/>
    <property type="match status" value="1"/>
</dbReference>
<dbReference type="Pfam" id="PF00059">
    <property type="entry name" value="Lectin_C"/>
    <property type="match status" value="1"/>
</dbReference>
<dbReference type="PRINTS" id="PR01504">
    <property type="entry name" value="PNCREATITSAP"/>
</dbReference>
<dbReference type="SMART" id="SM00034">
    <property type="entry name" value="CLECT"/>
    <property type="match status" value="1"/>
</dbReference>
<dbReference type="SUPFAM" id="SSF56436">
    <property type="entry name" value="C-type lectin-like"/>
    <property type="match status" value="1"/>
</dbReference>
<dbReference type="PROSITE" id="PS00615">
    <property type="entry name" value="C_TYPE_LECTIN_1"/>
    <property type="match status" value="1"/>
</dbReference>
<dbReference type="PROSITE" id="PS50041">
    <property type="entry name" value="C_TYPE_LECTIN_2"/>
    <property type="match status" value="1"/>
</dbReference>
<reference key="1">
    <citation type="journal article" date="2008" name="Mol. Cell. Proteomics">
        <title>Evolution of an arsenal: structural and functional diversification of the venom system in the advanced snakes (Caenophidia).</title>
        <authorList>
            <person name="Fry B.G."/>
            <person name="Scheib H."/>
            <person name="van der Weerd L."/>
            <person name="Young B."/>
            <person name="McNaughtan J."/>
            <person name="Ramjan S.F.R."/>
            <person name="Vidal N."/>
            <person name="Poelmann R.E."/>
            <person name="Norman J.A."/>
        </authorList>
    </citation>
    <scope>NUCLEOTIDE SEQUENCE [MRNA]</scope>
    <source>
        <tissue>Venom gland</tissue>
    </source>
</reference>
<keyword id="KW-0106">Calcium</keyword>
<keyword id="KW-1015">Disulfide bond</keyword>
<keyword id="KW-0430">Lectin</keyword>
<keyword id="KW-0479">Metal-binding</keyword>
<keyword id="KW-0964">Secreted</keyword>
<keyword id="KW-0732">Signal</keyword>